<dbReference type="EMBL" id="AF001900">
    <property type="protein sequence ID" value="AAB61576.1"/>
    <property type="molecule type" value="mRNA"/>
</dbReference>
<dbReference type="EMBL" id="AF017987">
    <property type="protein sequence ID" value="AAB70793.1"/>
    <property type="molecule type" value="mRNA"/>
</dbReference>
<dbReference type="EMBL" id="AF056087">
    <property type="protein sequence ID" value="AAC12877.1"/>
    <property type="molecule type" value="mRNA"/>
</dbReference>
<dbReference type="EMBL" id="BC036503">
    <property type="protein sequence ID" value="AAH36503.1"/>
    <property type="molecule type" value="mRNA"/>
</dbReference>
<dbReference type="CCDS" id="CCDS34886.1"/>
<dbReference type="RefSeq" id="NP_003003.3">
    <property type="nucleotide sequence ID" value="NM_003012.4"/>
</dbReference>
<dbReference type="SMR" id="Q8N474"/>
<dbReference type="BioGRID" id="112320">
    <property type="interactions" value="24"/>
</dbReference>
<dbReference type="FunCoup" id="Q8N474">
    <property type="interactions" value="304"/>
</dbReference>
<dbReference type="IntAct" id="Q8N474">
    <property type="interactions" value="8"/>
</dbReference>
<dbReference type="MINT" id="Q8N474"/>
<dbReference type="STRING" id="9606.ENSP00000220772"/>
<dbReference type="BindingDB" id="Q8N474"/>
<dbReference type="ChEMBL" id="CHEMBL5517"/>
<dbReference type="MEROPS" id="I93.002"/>
<dbReference type="TCDB" id="9.A.14.16.7">
    <property type="family name" value="the g-protein-coupled receptor (gpcr) family"/>
</dbReference>
<dbReference type="GlyCosmos" id="Q8N474">
    <property type="glycosylation" value="5 sites, 3 glycans"/>
</dbReference>
<dbReference type="GlyGen" id="Q8N474">
    <property type="glycosylation" value="5 sites, 3 O-linked glycans (4 sites)"/>
</dbReference>
<dbReference type="iPTMnet" id="Q8N474"/>
<dbReference type="PhosphoSitePlus" id="Q8N474"/>
<dbReference type="BioMuta" id="SFRP1"/>
<dbReference type="DMDM" id="61216811"/>
<dbReference type="jPOST" id="Q8N474"/>
<dbReference type="MassIVE" id="Q8N474"/>
<dbReference type="PaxDb" id="9606-ENSP00000220772"/>
<dbReference type="PeptideAtlas" id="Q8N474"/>
<dbReference type="ProteomicsDB" id="71892"/>
<dbReference type="Pumba" id="Q8N474"/>
<dbReference type="Antibodypedia" id="3767">
    <property type="antibodies" value="420 antibodies from 40 providers"/>
</dbReference>
<dbReference type="DNASU" id="6422"/>
<dbReference type="YCharOS" id="Q8N474">
    <property type="antibodies" value="Tested 11 antibodies from 5 manufacturers"/>
</dbReference>
<dbReference type="Ensembl" id="ENST00000220772.8">
    <property type="protein sequence ID" value="ENSP00000220772.3"/>
    <property type="gene ID" value="ENSG00000104332.12"/>
</dbReference>
<dbReference type="GeneID" id="6422"/>
<dbReference type="KEGG" id="hsa:6422"/>
<dbReference type="MANE-Select" id="ENST00000220772.8">
    <property type="protein sequence ID" value="ENSP00000220772.3"/>
    <property type="RefSeq nucleotide sequence ID" value="NM_003012.5"/>
    <property type="RefSeq protein sequence ID" value="NP_003003.3"/>
</dbReference>
<dbReference type="UCSC" id="uc003xnt.4">
    <property type="organism name" value="human"/>
</dbReference>
<dbReference type="AGR" id="HGNC:10776"/>
<dbReference type="CTD" id="6422"/>
<dbReference type="DisGeNET" id="6422"/>
<dbReference type="GeneCards" id="SFRP1"/>
<dbReference type="HGNC" id="HGNC:10776">
    <property type="gene designation" value="SFRP1"/>
</dbReference>
<dbReference type="HPA" id="ENSG00000104332">
    <property type="expression patterns" value="Tissue enhanced (choroid)"/>
</dbReference>
<dbReference type="MIM" id="604156">
    <property type="type" value="gene"/>
</dbReference>
<dbReference type="neXtProt" id="NX_Q8N474"/>
<dbReference type="OpenTargets" id="ENSG00000104332"/>
<dbReference type="PharmGKB" id="PA35692"/>
<dbReference type="VEuPathDB" id="HostDB:ENSG00000104332"/>
<dbReference type="eggNOG" id="KOG3577">
    <property type="taxonomic scope" value="Eukaryota"/>
</dbReference>
<dbReference type="GeneTree" id="ENSGT00940000159875"/>
<dbReference type="HOGENOM" id="CLU_054647_0_0_1"/>
<dbReference type="InParanoid" id="Q8N474"/>
<dbReference type="OMA" id="AMLEHMC"/>
<dbReference type="OrthoDB" id="5985572at2759"/>
<dbReference type="PAN-GO" id="Q8N474">
    <property type="GO annotations" value="5 GO annotations based on evolutionary models"/>
</dbReference>
<dbReference type="PhylomeDB" id="Q8N474"/>
<dbReference type="TreeFam" id="TF350133"/>
<dbReference type="PathwayCommons" id="Q8N474"/>
<dbReference type="Reactome" id="R-HSA-201681">
    <property type="pathway name" value="TCF dependent signaling in response to WNT"/>
</dbReference>
<dbReference type="Reactome" id="R-HSA-3772470">
    <property type="pathway name" value="Negative regulation of TCF-dependent signaling by WNT ligand antagonists"/>
</dbReference>
<dbReference type="SignaLink" id="Q8N474"/>
<dbReference type="SIGNOR" id="Q8N474"/>
<dbReference type="BioGRID-ORCS" id="6422">
    <property type="hits" value="15 hits in 1153 CRISPR screens"/>
</dbReference>
<dbReference type="ChiTaRS" id="SFRP1">
    <property type="organism name" value="human"/>
</dbReference>
<dbReference type="GeneWiki" id="Secreted_frizzled-related_protein_1"/>
<dbReference type="GenomeRNAi" id="6422"/>
<dbReference type="Pharos" id="Q8N474">
    <property type="development level" value="Tchem"/>
</dbReference>
<dbReference type="PRO" id="PR:Q8N474"/>
<dbReference type="Proteomes" id="UP000005640">
    <property type="component" value="Chromosome 8"/>
</dbReference>
<dbReference type="RNAct" id="Q8N474">
    <property type="molecule type" value="protein"/>
</dbReference>
<dbReference type="Bgee" id="ENSG00000104332">
    <property type="expression patterns" value="Expressed in ventricular zone and 197 other cell types or tissues"/>
</dbReference>
<dbReference type="ExpressionAtlas" id="Q8N474">
    <property type="expression patterns" value="baseline and differential"/>
</dbReference>
<dbReference type="GO" id="GO:0009986">
    <property type="term" value="C:cell surface"/>
    <property type="evidence" value="ECO:0000314"/>
    <property type="project" value="UniProtKB"/>
</dbReference>
<dbReference type="GO" id="GO:0062023">
    <property type="term" value="C:collagen-containing extracellular matrix"/>
    <property type="evidence" value="ECO:0000314"/>
    <property type="project" value="BHF-UCL"/>
</dbReference>
<dbReference type="GO" id="GO:0005829">
    <property type="term" value="C:cytosol"/>
    <property type="evidence" value="ECO:0000314"/>
    <property type="project" value="UniProtKB"/>
</dbReference>
<dbReference type="GO" id="GO:0070062">
    <property type="term" value="C:extracellular exosome"/>
    <property type="evidence" value="ECO:0007005"/>
    <property type="project" value="UniProtKB"/>
</dbReference>
<dbReference type="GO" id="GO:0005576">
    <property type="term" value="C:extracellular region"/>
    <property type="evidence" value="ECO:0000304"/>
    <property type="project" value="Reactome"/>
</dbReference>
<dbReference type="GO" id="GO:0005615">
    <property type="term" value="C:extracellular space"/>
    <property type="evidence" value="ECO:0000314"/>
    <property type="project" value="UniProtKB"/>
</dbReference>
<dbReference type="GO" id="GO:0005886">
    <property type="term" value="C:plasma membrane"/>
    <property type="evidence" value="ECO:0000250"/>
    <property type="project" value="UniProtKB"/>
</dbReference>
<dbReference type="GO" id="GO:0004197">
    <property type="term" value="F:cysteine-type endopeptidase activity"/>
    <property type="evidence" value="ECO:0000315"/>
    <property type="project" value="UniProtKB"/>
</dbReference>
<dbReference type="GO" id="GO:0005109">
    <property type="term" value="F:frizzled binding"/>
    <property type="evidence" value="ECO:0000353"/>
    <property type="project" value="UniProtKB"/>
</dbReference>
<dbReference type="GO" id="GO:0008201">
    <property type="term" value="F:heparin binding"/>
    <property type="evidence" value="ECO:0000314"/>
    <property type="project" value="UniProtKB"/>
</dbReference>
<dbReference type="GO" id="GO:0042802">
    <property type="term" value="F:identical protein binding"/>
    <property type="evidence" value="ECO:0000353"/>
    <property type="project" value="BHF-UCL"/>
</dbReference>
<dbReference type="GO" id="GO:0017147">
    <property type="term" value="F:Wnt-protein binding"/>
    <property type="evidence" value="ECO:0000314"/>
    <property type="project" value="MGI"/>
</dbReference>
<dbReference type="GO" id="GO:0030509">
    <property type="term" value="P:BMP signaling pathway"/>
    <property type="evidence" value="ECO:0007669"/>
    <property type="project" value="Ensembl"/>
</dbReference>
<dbReference type="GO" id="GO:0060346">
    <property type="term" value="P:bone trabecula formation"/>
    <property type="evidence" value="ECO:0007669"/>
    <property type="project" value="Ensembl"/>
</dbReference>
<dbReference type="GO" id="GO:0060070">
    <property type="term" value="P:canonical Wnt signaling pathway"/>
    <property type="evidence" value="ECO:0000314"/>
    <property type="project" value="BHF-UCL"/>
</dbReference>
<dbReference type="GO" id="GO:0071773">
    <property type="term" value="P:cellular response to BMP stimulus"/>
    <property type="evidence" value="ECO:0000270"/>
    <property type="project" value="UniProtKB"/>
</dbReference>
<dbReference type="GO" id="GO:0071392">
    <property type="term" value="P:cellular response to estradiol stimulus"/>
    <property type="evidence" value="ECO:0000270"/>
    <property type="project" value="UniProtKB"/>
</dbReference>
<dbReference type="GO" id="GO:0071391">
    <property type="term" value="P:cellular response to estrogen stimulus"/>
    <property type="evidence" value="ECO:0000314"/>
    <property type="project" value="UniProtKB"/>
</dbReference>
<dbReference type="GO" id="GO:0071456">
    <property type="term" value="P:cellular response to hypoxia"/>
    <property type="evidence" value="ECO:0000270"/>
    <property type="project" value="UniProtKB"/>
</dbReference>
<dbReference type="GO" id="GO:0071347">
    <property type="term" value="P:cellular response to interleukin-1"/>
    <property type="evidence" value="ECO:0000270"/>
    <property type="project" value="UniProtKB"/>
</dbReference>
<dbReference type="GO" id="GO:0071380">
    <property type="term" value="P:cellular response to prostaglandin E stimulus"/>
    <property type="evidence" value="ECO:0000270"/>
    <property type="project" value="UniProtKB"/>
</dbReference>
<dbReference type="GO" id="GO:0009267">
    <property type="term" value="P:cellular response to starvation"/>
    <property type="evidence" value="ECO:0000270"/>
    <property type="project" value="UniProtKB"/>
</dbReference>
<dbReference type="GO" id="GO:0071560">
    <property type="term" value="P:cellular response to transforming growth factor beta stimulus"/>
    <property type="evidence" value="ECO:0000270"/>
    <property type="project" value="UniProtKB"/>
</dbReference>
<dbReference type="GO" id="GO:0071356">
    <property type="term" value="P:cellular response to tumor necrosis factor"/>
    <property type="evidence" value="ECO:0000314"/>
    <property type="project" value="UniProtKB"/>
</dbReference>
<dbReference type="GO" id="GO:0071305">
    <property type="term" value="P:cellular response to vitamin D"/>
    <property type="evidence" value="ECO:0000270"/>
    <property type="project" value="UniProtKB"/>
</dbReference>
<dbReference type="GO" id="GO:0071481">
    <property type="term" value="P:cellular response to X-ray"/>
    <property type="evidence" value="ECO:0007669"/>
    <property type="project" value="Ensembl"/>
</dbReference>
<dbReference type="GO" id="GO:0090246">
    <property type="term" value="P:convergent extension involved in somitogenesis"/>
    <property type="evidence" value="ECO:0007669"/>
    <property type="project" value="Ensembl"/>
</dbReference>
<dbReference type="GO" id="GO:0048546">
    <property type="term" value="P:digestive tract morphogenesis"/>
    <property type="evidence" value="ECO:0007669"/>
    <property type="project" value="Ensembl"/>
</dbReference>
<dbReference type="GO" id="GO:0071542">
    <property type="term" value="P:dopaminergic neuron differentiation"/>
    <property type="evidence" value="ECO:0007669"/>
    <property type="project" value="Ensembl"/>
</dbReference>
<dbReference type="GO" id="GO:0009950">
    <property type="term" value="P:dorsal/ventral axis specification"/>
    <property type="evidence" value="ECO:0000314"/>
    <property type="project" value="UniProtKB"/>
</dbReference>
<dbReference type="GO" id="GO:0097191">
    <property type="term" value="P:extrinsic apoptotic signaling pathway"/>
    <property type="evidence" value="ECO:0007669"/>
    <property type="project" value="Ensembl"/>
</dbReference>
<dbReference type="GO" id="GO:0008585">
    <property type="term" value="P:female gonad development"/>
    <property type="evidence" value="ECO:0007669"/>
    <property type="project" value="Ensembl"/>
</dbReference>
<dbReference type="GO" id="GO:0002244">
    <property type="term" value="P:hematopoietic progenitor cell differentiation"/>
    <property type="evidence" value="ECO:0000314"/>
    <property type="project" value="UniProtKB"/>
</dbReference>
<dbReference type="GO" id="GO:0060218">
    <property type="term" value="P:hematopoietic stem cell differentiation"/>
    <property type="evidence" value="ECO:0000314"/>
    <property type="project" value="UniProtKB"/>
</dbReference>
<dbReference type="GO" id="GO:0008584">
    <property type="term" value="P:male gonad development"/>
    <property type="evidence" value="ECO:0007669"/>
    <property type="project" value="Ensembl"/>
</dbReference>
<dbReference type="GO" id="GO:0060766">
    <property type="term" value="P:negative regulation of androgen receptor signaling pathway"/>
    <property type="evidence" value="ECO:0000314"/>
    <property type="project" value="UniProtKB"/>
</dbReference>
<dbReference type="GO" id="GO:0043066">
    <property type="term" value="P:negative regulation of apoptotic process"/>
    <property type="evidence" value="ECO:0000315"/>
    <property type="project" value="UniProtKB"/>
</dbReference>
<dbReference type="GO" id="GO:0045578">
    <property type="term" value="P:negative regulation of B cell differentiation"/>
    <property type="evidence" value="ECO:0000315"/>
    <property type="project" value="UniProtKB"/>
</dbReference>
<dbReference type="GO" id="GO:0030514">
    <property type="term" value="P:negative regulation of BMP signaling pathway"/>
    <property type="evidence" value="ECO:0007669"/>
    <property type="project" value="Ensembl"/>
</dbReference>
<dbReference type="GO" id="GO:0046851">
    <property type="term" value="P:negative regulation of bone remodeling"/>
    <property type="evidence" value="ECO:0000315"/>
    <property type="project" value="UniProtKB"/>
</dbReference>
<dbReference type="GO" id="GO:0090090">
    <property type="term" value="P:negative regulation of canonical Wnt signaling pathway"/>
    <property type="evidence" value="ECO:0000314"/>
    <property type="project" value="UniProtKB"/>
</dbReference>
<dbReference type="GO" id="GO:0030308">
    <property type="term" value="P:negative regulation of cell growth"/>
    <property type="evidence" value="ECO:0000314"/>
    <property type="project" value="UniProtKB"/>
</dbReference>
<dbReference type="GO" id="GO:0030336">
    <property type="term" value="P:negative regulation of cell migration"/>
    <property type="evidence" value="ECO:0000314"/>
    <property type="project" value="UniProtKB"/>
</dbReference>
<dbReference type="GO" id="GO:0008285">
    <property type="term" value="P:negative regulation of cell population proliferation"/>
    <property type="evidence" value="ECO:0000314"/>
    <property type="project" value="UniProtKB"/>
</dbReference>
<dbReference type="GO" id="GO:0045892">
    <property type="term" value="P:negative regulation of DNA-templated transcription"/>
    <property type="evidence" value="ECO:0000314"/>
    <property type="project" value="UniProtKB"/>
</dbReference>
<dbReference type="GO" id="GO:0050680">
    <property type="term" value="P:negative regulation of epithelial cell proliferation"/>
    <property type="evidence" value="ECO:0000314"/>
    <property type="project" value="UniProtKB"/>
</dbReference>
<dbReference type="GO" id="GO:0010719">
    <property type="term" value="P:negative regulation of epithelial to mesenchymal transition"/>
    <property type="evidence" value="ECO:0000314"/>
    <property type="project" value="UniProtKB"/>
</dbReference>
<dbReference type="GO" id="GO:2000270">
    <property type="term" value="P:negative regulation of fibroblast apoptotic process"/>
    <property type="evidence" value="ECO:0000314"/>
    <property type="project" value="UniProtKB"/>
</dbReference>
<dbReference type="GO" id="GO:0048147">
    <property type="term" value="P:negative regulation of fibroblast proliferation"/>
    <property type="evidence" value="ECO:0000314"/>
    <property type="project" value="BHF-UCL"/>
</dbReference>
<dbReference type="GO" id="GO:0010629">
    <property type="term" value="P:negative regulation of gene expression"/>
    <property type="evidence" value="ECO:0000314"/>
    <property type="project" value="UniProtKB"/>
</dbReference>
<dbReference type="GO" id="GO:0030279">
    <property type="term" value="P:negative regulation of ossification"/>
    <property type="evidence" value="ECO:0000314"/>
    <property type="project" value="UniProtKB"/>
</dbReference>
<dbReference type="GO" id="GO:0045668">
    <property type="term" value="P:negative regulation of osteoblast differentiation"/>
    <property type="evidence" value="ECO:0007669"/>
    <property type="project" value="Ensembl"/>
</dbReference>
<dbReference type="GO" id="GO:0033689">
    <property type="term" value="P:negative regulation of osteoblast proliferation"/>
    <property type="evidence" value="ECO:0000315"/>
    <property type="project" value="UniProtKB"/>
</dbReference>
<dbReference type="GO" id="GO:0045671">
    <property type="term" value="P:negative regulation of osteoclast differentiation"/>
    <property type="evidence" value="ECO:0007669"/>
    <property type="project" value="Ensembl"/>
</dbReference>
<dbReference type="GO" id="GO:0050732">
    <property type="term" value="P:negative regulation of peptidyl-tyrosine phosphorylation"/>
    <property type="evidence" value="ECO:0000314"/>
    <property type="project" value="UniProtKB"/>
</dbReference>
<dbReference type="GO" id="GO:0030178">
    <property type="term" value="P:negative regulation of Wnt signaling pathway"/>
    <property type="evidence" value="ECO:0000314"/>
    <property type="project" value="UniProtKB"/>
</dbReference>
<dbReference type="GO" id="GO:0014034">
    <property type="term" value="P:neural crest cell fate commitment"/>
    <property type="evidence" value="ECO:0007669"/>
    <property type="project" value="Ensembl"/>
</dbReference>
<dbReference type="GO" id="GO:0001843">
    <property type="term" value="P:neural tube closure"/>
    <property type="evidence" value="ECO:0007669"/>
    <property type="project" value="Ensembl"/>
</dbReference>
<dbReference type="GO" id="GO:0035567">
    <property type="term" value="P:non-canonical Wnt signaling pathway"/>
    <property type="evidence" value="ECO:0000318"/>
    <property type="project" value="GO_Central"/>
</dbReference>
<dbReference type="GO" id="GO:0001649">
    <property type="term" value="P:osteoblast differentiation"/>
    <property type="evidence" value="ECO:0000270"/>
    <property type="project" value="UniProtKB"/>
</dbReference>
<dbReference type="GO" id="GO:0030316">
    <property type="term" value="P:osteoclast differentiation"/>
    <property type="evidence" value="ECO:0007669"/>
    <property type="project" value="Ensembl"/>
</dbReference>
<dbReference type="GO" id="GO:0043065">
    <property type="term" value="P:positive regulation of apoptotic process"/>
    <property type="evidence" value="ECO:0000314"/>
    <property type="project" value="UniProtKB"/>
</dbReference>
<dbReference type="GO" id="GO:0090263">
    <property type="term" value="P:positive regulation of canonical Wnt signaling pathway"/>
    <property type="evidence" value="ECO:0000314"/>
    <property type="project" value="UniProtKB"/>
</dbReference>
<dbReference type="GO" id="GO:0030307">
    <property type="term" value="P:positive regulation of cell growth"/>
    <property type="evidence" value="ECO:0000314"/>
    <property type="project" value="UniProtKB"/>
</dbReference>
<dbReference type="GO" id="GO:0008284">
    <property type="term" value="P:positive regulation of cell population proliferation"/>
    <property type="evidence" value="ECO:0000314"/>
    <property type="project" value="UniProtKB"/>
</dbReference>
<dbReference type="GO" id="GO:0001954">
    <property type="term" value="P:positive regulation of cell-matrix adhesion"/>
    <property type="evidence" value="ECO:0000250"/>
    <property type="project" value="BHF-UCL"/>
</dbReference>
<dbReference type="GO" id="GO:0045893">
    <property type="term" value="P:positive regulation of DNA-templated transcription"/>
    <property type="evidence" value="ECO:0000314"/>
    <property type="project" value="UniProtKB"/>
</dbReference>
<dbReference type="GO" id="GO:1902043">
    <property type="term" value="P:positive regulation of extrinsic apoptotic signaling pathway via death domain receptors"/>
    <property type="evidence" value="ECO:0000314"/>
    <property type="project" value="BHF-UCL"/>
</dbReference>
<dbReference type="GO" id="GO:0045600">
    <property type="term" value="P:positive regulation of fat cell differentiation"/>
    <property type="evidence" value="ECO:0000314"/>
    <property type="project" value="UniProtKB"/>
</dbReference>
<dbReference type="GO" id="GO:2000271">
    <property type="term" value="P:positive regulation of fibroblast apoptotic process"/>
    <property type="evidence" value="ECO:0000314"/>
    <property type="project" value="UniProtKB"/>
</dbReference>
<dbReference type="GO" id="GO:0051894">
    <property type="term" value="P:positive regulation of focal adhesion assembly"/>
    <property type="evidence" value="ECO:0000250"/>
    <property type="project" value="BHF-UCL"/>
</dbReference>
<dbReference type="GO" id="GO:2000052">
    <property type="term" value="P:positive regulation of non-canonical Wnt signaling pathway"/>
    <property type="evidence" value="ECO:0000314"/>
    <property type="project" value="UniProtKB"/>
</dbReference>
<dbReference type="GO" id="GO:0045880">
    <property type="term" value="P:positive regulation of smoothened signaling pathway"/>
    <property type="evidence" value="ECO:0000315"/>
    <property type="project" value="UniProtKB"/>
</dbReference>
<dbReference type="GO" id="GO:0051496">
    <property type="term" value="P:positive regulation of stress fiber assembly"/>
    <property type="evidence" value="ECO:0000250"/>
    <property type="project" value="BHF-UCL"/>
</dbReference>
<dbReference type="GO" id="GO:0030177">
    <property type="term" value="P:positive regulation of Wnt signaling pathway"/>
    <property type="evidence" value="ECO:0000314"/>
    <property type="project" value="UniProtKB"/>
</dbReference>
<dbReference type="GO" id="GO:0060527">
    <property type="term" value="P:prostate epithelial cord arborization involved in prostate glandular acinus morphogenesis"/>
    <property type="evidence" value="ECO:0007669"/>
    <property type="project" value="Ensembl"/>
</dbReference>
<dbReference type="GO" id="GO:0045765">
    <property type="term" value="P:regulation of angiogenesis"/>
    <property type="evidence" value="ECO:0000250"/>
    <property type="project" value="BHF-UCL"/>
</dbReference>
<dbReference type="GO" id="GO:0060687">
    <property type="term" value="P:regulation of branching involved in prostate gland morphogenesis"/>
    <property type="evidence" value="ECO:0007669"/>
    <property type="project" value="Ensembl"/>
</dbReference>
<dbReference type="GO" id="GO:0010564">
    <property type="term" value="P:regulation of cell cycle process"/>
    <property type="evidence" value="ECO:0000315"/>
    <property type="project" value="UniProtKB"/>
</dbReference>
<dbReference type="GO" id="GO:0090175">
    <property type="term" value="P:regulation of establishment of planar polarity"/>
    <property type="evidence" value="ECO:0007669"/>
    <property type="project" value="Ensembl"/>
</dbReference>
<dbReference type="GO" id="GO:1904956">
    <property type="term" value="P:regulation of midbrain dopaminergic neuron differentiation"/>
    <property type="evidence" value="ECO:0007669"/>
    <property type="project" value="Ensembl"/>
</dbReference>
<dbReference type="GO" id="GO:0010975">
    <property type="term" value="P:regulation of neuron projection development"/>
    <property type="evidence" value="ECO:0007669"/>
    <property type="project" value="Ensembl"/>
</dbReference>
<dbReference type="GO" id="GO:0009410">
    <property type="term" value="P:response to xenobiotic stimulus"/>
    <property type="evidence" value="ECO:0007669"/>
    <property type="project" value="Ensembl"/>
</dbReference>
<dbReference type="GO" id="GO:0035019">
    <property type="term" value="P:somatic stem cell population maintenance"/>
    <property type="evidence" value="ECO:0007669"/>
    <property type="project" value="Ensembl"/>
</dbReference>
<dbReference type="GO" id="GO:0001657">
    <property type="term" value="P:ureteric bud development"/>
    <property type="evidence" value="ECO:0007669"/>
    <property type="project" value="Ensembl"/>
</dbReference>
<dbReference type="GO" id="GO:0016055">
    <property type="term" value="P:Wnt signaling pathway"/>
    <property type="evidence" value="ECO:0000250"/>
    <property type="project" value="BHF-UCL"/>
</dbReference>
<dbReference type="GO" id="GO:0090244">
    <property type="term" value="P:Wnt signaling pathway involved in somitogenesis"/>
    <property type="evidence" value="ECO:0007669"/>
    <property type="project" value="Ensembl"/>
</dbReference>
<dbReference type="GO" id="GO:0060071">
    <property type="term" value="P:Wnt signaling pathway, planar cell polarity pathway"/>
    <property type="evidence" value="ECO:0007669"/>
    <property type="project" value="Ensembl"/>
</dbReference>
<dbReference type="CDD" id="cd07443">
    <property type="entry name" value="CRD_SFRP1"/>
    <property type="match status" value="1"/>
</dbReference>
<dbReference type="CDD" id="cd03580">
    <property type="entry name" value="NTR_Sfrp1_like"/>
    <property type="match status" value="1"/>
</dbReference>
<dbReference type="FunFam" id="2.40.50.120:FF:000003">
    <property type="entry name" value="Secreted frizzled-related protein 1"/>
    <property type="match status" value="1"/>
</dbReference>
<dbReference type="FunFam" id="1.10.2000.10:FF:000001">
    <property type="entry name" value="secreted frizzled-related protein 2"/>
    <property type="match status" value="1"/>
</dbReference>
<dbReference type="Gene3D" id="2.40.50.120">
    <property type="match status" value="1"/>
</dbReference>
<dbReference type="Gene3D" id="1.10.2000.10">
    <property type="entry name" value="Frizzled cysteine-rich domain"/>
    <property type="match status" value="1"/>
</dbReference>
<dbReference type="InterPro" id="IPR015526">
    <property type="entry name" value="Frizzled/SFRP"/>
</dbReference>
<dbReference type="InterPro" id="IPR020067">
    <property type="entry name" value="Frizzled_dom"/>
</dbReference>
<dbReference type="InterPro" id="IPR036790">
    <property type="entry name" value="Frizzled_dom_sf"/>
</dbReference>
<dbReference type="InterPro" id="IPR001134">
    <property type="entry name" value="Netrin_domain"/>
</dbReference>
<dbReference type="InterPro" id="IPR018933">
    <property type="entry name" value="Netrin_module_non-TIMP"/>
</dbReference>
<dbReference type="InterPro" id="IPR041760">
    <property type="entry name" value="SFRP1_CRD"/>
</dbReference>
<dbReference type="InterPro" id="IPR008993">
    <property type="entry name" value="TIMP-like_OB-fold"/>
</dbReference>
<dbReference type="PANTHER" id="PTHR11309">
    <property type="entry name" value="FRIZZLED"/>
    <property type="match status" value="1"/>
</dbReference>
<dbReference type="PANTHER" id="PTHR11309:SF87">
    <property type="entry name" value="SECRETED FRIZZLED-RELATED PROTEIN 1"/>
    <property type="match status" value="1"/>
</dbReference>
<dbReference type="Pfam" id="PF01392">
    <property type="entry name" value="Fz"/>
    <property type="match status" value="1"/>
</dbReference>
<dbReference type="Pfam" id="PF01759">
    <property type="entry name" value="NTR"/>
    <property type="match status" value="1"/>
</dbReference>
<dbReference type="SMART" id="SM00643">
    <property type="entry name" value="C345C"/>
    <property type="match status" value="1"/>
</dbReference>
<dbReference type="SMART" id="SM00063">
    <property type="entry name" value="FRI"/>
    <property type="match status" value="1"/>
</dbReference>
<dbReference type="SUPFAM" id="SSF63501">
    <property type="entry name" value="Frizzled cysteine-rich domain"/>
    <property type="match status" value="1"/>
</dbReference>
<dbReference type="SUPFAM" id="SSF50242">
    <property type="entry name" value="TIMP-like"/>
    <property type="match status" value="1"/>
</dbReference>
<dbReference type="PROSITE" id="PS50038">
    <property type="entry name" value="FZ"/>
    <property type="match status" value="1"/>
</dbReference>
<dbReference type="PROSITE" id="PS50189">
    <property type="entry name" value="NTR"/>
    <property type="match status" value="1"/>
</dbReference>
<name>SFRP1_HUMAN</name>
<proteinExistence type="evidence at protein level"/>
<accession>Q8N474</accession>
<accession>O00546</accession>
<accession>O14779</accession>
<reference key="1">
    <citation type="journal article" date="1997" name="Proc. Natl. Acad. Sci. U.S.A.">
        <title>Purification and molecular cloning of a secreted, Frizzled-related antagonist of Wnt action.</title>
        <authorList>
            <person name="Finch P.W."/>
            <person name="He X."/>
            <person name="Kelley M.J."/>
            <person name="Uren A."/>
            <person name="Schaudies R.P."/>
            <person name="Popescu N.C."/>
            <person name="Rudikoff S."/>
            <person name="Aaronson S.A."/>
            <person name="Varmus H.E."/>
            <person name="Rubin J.S."/>
        </authorList>
    </citation>
    <scope>NUCLEOTIDE SEQUENCE [MRNA]</scope>
    <scope>PROTEIN SEQUENCE OF 39-78</scope>
    <source>
        <tissue>Embryonic lung fibroblast</tissue>
    </source>
</reference>
<reference key="2">
    <citation type="journal article" date="1997" name="Proc. Natl. Acad. Sci. U.S.A.">
        <title>SARPs: a family of secreted apoptosis-related proteins.</title>
        <authorList>
            <person name="Melkonyan H.S."/>
            <person name="Chang W.C."/>
            <person name="Shapiro J.P."/>
            <person name="Mahadevappa M."/>
            <person name="Fitzpatrick P.A."/>
            <person name="Kiefer M.C."/>
            <person name="Tomei L.D."/>
            <person name="Umansky S.R."/>
        </authorList>
    </citation>
    <scope>NUCLEOTIDE SEQUENCE [MRNA]</scope>
    <scope>TISSUE SPECIFICITY</scope>
    <source>
        <tissue>Heart</tissue>
    </source>
</reference>
<reference key="3">
    <citation type="journal article" date="1998" name="Int. J. Cancer">
        <title>Up-regulation of human secreted frizzled homolog in apoptosis and its down-regulation in breast tumors.</title>
        <authorList>
            <person name="Zhou Z."/>
            <person name="Wang J."/>
            <person name="Han X."/>
            <person name="Zhou J."/>
            <person name="Linder S."/>
        </authorList>
    </citation>
    <scope>NUCLEOTIDE SEQUENCE [MRNA]</scope>
    <scope>INDUCTION</scope>
</reference>
<reference key="4">
    <citation type="journal article" date="2004" name="Genome Res.">
        <title>The status, quality, and expansion of the NIH full-length cDNA project: the Mammalian Gene Collection (MGC).</title>
        <authorList>
            <consortium name="The MGC Project Team"/>
        </authorList>
    </citation>
    <scope>NUCLEOTIDE SEQUENCE [LARGE SCALE MRNA]</scope>
    <source>
        <tissue>Brain</tissue>
    </source>
</reference>
<reference key="5">
    <citation type="journal article" date="2002" name="J. Biol. Chem.">
        <title>Disulfide bond assignments of secreted Frizzled-related protein-1 provide insights about Frizzled homology and netrin modules.</title>
        <authorList>
            <person name="Chong J.M."/>
            <person name="Ueren A."/>
            <person name="Rubin J.S."/>
            <person name="Speicher D.W."/>
        </authorList>
    </citation>
    <scope>PROTEIN SEQUENCE OF 32-314</scope>
    <scope>DISULFIDE BONDS</scope>
    <scope>GLYCOSYLATION AT ASN-173</scope>
    <scope>MUTAGENESIS OF ASN-173 AND ASN-263</scope>
</reference>
<reference key="6">
    <citation type="journal article" date="1999" name="J. Biol. Chem.">
        <title>Interaction of frizzled related protein (FRP) with Wnt ligands and the frizzled receptor suggests alternative mechanisms for FRP inhibition of Wnt signaling.</title>
        <authorList>
            <person name="Bafico A."/>
            <person name="Gazit A."/>
            <person name="Pramila T."/>
            <person name="Finch P.W."/>
            <person name="Yaniv A."/>
            <person name="Aaronson S.A."/>
        </authorList>
    </citation>
    <scope>INTERACTION WITH WNT1; WNT2 AND FRZD6</scope>
</reference>
<reference key="7">
    <citation type="journal article" date="2002" name="J. Clin. Endocrinol. Metab.">
        <title>Secreted frizzled related protein 1 is overexpressed in uterine leiomyomas, associated with a high estrogenic environment and unrelated to proliferative activity.</title>
        <authorList>
            <person name="Fukuhara K."/>
            <person name="Kariya M."/>
            <person name="Kita M."/>
            <person name="Shime H."/>
            <person name="Kanamori T."/>
            <person name="Kosaka C."/>
            <person name="Orii A."/>
            <person name="Fujita J."/>
            <person name="Fujii S."/>
        </authorList>
    </citation>
    <scope>INDUCTION</scope>
</reference>
<comment type="function">
    <text evidence="1">Soluble frizzled-related proteins (sFRPS) function as modulators of Wnt signaling through direct interaction with Wnts. They have a role in regulating cell growth and differentiation in specific cell types. SFRP1 decreases intracellular beta-catenin levels (By similarity). Has antiproliferative effects on vascular cells, in vitro and in vivo, and can induce, in vivo, an angiogenic response. In vascular cell cycle, delays the G1 phase and entry into the S phase (By similarity). In kidney development, inhibits tubule formation and bud growth in metanephroi (By similarity). Inhibits WNT1/WNT4-mediated TCF-dependent transcription.</text>
</comment>
<comment type="subunit">
    <text evidence="1">Interacts with WNT1, WNT2 and FRZD6. Interacts with WNT4, WNT8 and MYOC (By similarity).</text>
</comment>
<comment type="interaction">
    <interactant intactId="EBI-3940687">
        <id>Q8N474</id>
    </interactant>
    <interactant intactId="EBI-8754490">
        <id>O60353</id>
        <label>FZD6</label>
    </interactant>
    <organismsDiffer>false</organismsDiffer>
    <experiments>3</experiments>
</comment>
<comment type="interaction">
    <interactant intactId="EBI-3940687">
        <id>Q8N474</id>
    </interactant>
    <interactant intactId="EBI-2548832">
        <id>Q8N661</id>
        <label>TMEM86B</label>
    </interactant>
    <organismsDiffer>false</organismsDiffer>
    <experiments>3</experiments>
</comment>
<comment type="subcellular location">
    <subcellularLocation>
        <location>Secreted</location>
    </subcellularLocation>
    <text>Cell membrane or extracellular matrix-associated. Released by heparin-binding.</text>
</comment>
<comment type="tissue specificity">
    <text evidence="6">Widely expressed. Absent from lung, liver and peripheral blood leukocytes. Highest levels in heart and fetal kidney. Also expressed in testis, ovary, fetal brain and lung, leiomyomal cells, myometrial cells and vascular smooth muscle cells. Expressed in foreskin fibroblasts and in keratinocytes.</text>
</comment>
<comment type="induction">
    <text evidence="5 7">Down-regulated in colorectal and breast tumors. Up-regulated in uterine leiomyomas under high estrogenic conditions. Expression, in leiomyomal cells, also increased both under hypoxic and serum deprivation conditions.</text>
</comment>
<comment type="domain">
    <text evidence="1">The FZ domain is involved in binding with Wnt ligands.</text>
</comment>
<comment type="miscellaneous">
    <text>May have therapeutic use in cardiac surgery.</text>
</comment>
<comment type="similarity">
    <text evidence="8">Belongs to the secreted frizzled-related protein (sFRP) family.</text>
</comment>
<evidence type="ECO:0000250" key="1"/>
<evidence type="ECO:0000255" key="2">
    <source>
        <dbReference type="PROSITE-ProRule" id="PRU00090"/>
    </source>
</evidence>
<evidence type="ECO:0000255" key="3">
    <source>
        <dbReference type="PROSITE-ProRule" id="PRU00295"/>
    </source>
</evidence>
<evidence type="ECO:0000269" key="4">
    <source>
    </source>
</evidence>
<evidence type="ECO:0000269" key="5">
    <source>
    </source>
</evidence>
<evidence type="ECO:0000269" key="6">
    <source>
    </source>
</evidence>
<evidence type="ECO:0000269" key="7">
    <source>
    </source>
</evidence>
<evidence type="ECO:0000305" key="8"/>
<sequence>MGIGRSEGGRRGAALGVLLALGAALLAVGSASEYDYVSFQSDIGPYQSGRFYTKPPQCVDIPADLRLCHNVGYKKMVLPNLLEHETMAEVKQQASSWVPLLNKNCHAGTQVFLCSLFAPVCLDRPIYPCRWLCEAVRDSCEPVMQFFGFYWPEMLKCDKFPEGDVCIAMTPPNATEASKPQGTTVCPPCDNELKSEAIIEHLCASEFALRMKIKEVKKENGDKKIVPKKKKPLKLGPIKKKDLKKLVLYLKNGADCPCHQLDNLSHHFLIMGRKVKSQYLLTAIHKWDKKNKEFKNFMKKMKNHECPTFQSVFK</sequence>
<gene>
    <name type="primary">SFRP1</name>
    <name type="synonym">FRP</name>
    <name type="synonym">FRP1</name>
    <name type="synonym">SARP2</name>
</gene>
<feature type="signal peptide" evidence="4">
    <location>
        <begin position="1"/>
        <end position="31"/>
    </location>
</feature>
<feature type="chain" id="PRO_0000032538" description="Secreted frizzled-related protein 1">
    <location>
        <begin position="32"/>
        <end position="314"/>
    </location>
</feature>
<feature type="domain" description="FZ" evidence="2">
    <location>
        <begin position="53"/>
        <end position="169"/>
    </location>
</feature>
<feature type="domain" description="NTR" evidence="3">
    <location>
        <begin position="186"/>
        <end position="306"/>
    </location>
</feature>
<feature type="glycosylation site" description="N-linked (GlcNAc...) asparagine" evidence="4">
    <location>
        <position position="173"/>
    </location>
</feature>
<feature type="disulfide bond" evidence="4">
    <location>
        <begin position="58"/>
        <end position="121"/>
    </location>
</feature>
<feature type="disulfide bond" evidence="4">
    <location>
        <begin position="68"/>
        <end position="114"/>
    </location>
</feature>
<feature type="disulfide bond" evidence="4">
    <location>
        <begin position="105"/>
        <end position="140"/>
    </location>
</feature>
<feature type="disulfide bond" evidence="4">
    <location>
        <begin position="129"/>
        <end position="166"/>
    </location>
</feature>
<feature type="disulfide bond" evidence="4">
    <location>
        <begin position="133"/>
        <end position="157"/>
    </location>
</feature>
<feature type="disulfide bond" evidence="4">
    <location>
        <begin position="186"/>
        <end position="256"/>
    </location>
</feature>
<feature type="disulfide bond" evidence="4">
    <location>
        <begin position="189"/>
        <end position="258"/>
    </location>
</feature>
<feature type="disulfide bond" evidence="4">
    <location>
        <begin position="203"/>
        <end position="306"/>
    </location>
</feature>
<feature type="mutagenesis site" description="Reduced molecular weight." evidence="4">
    <original>N</original>
    <variation>Q</variation>
    <location>
        <position position="173"/>
    </location>
</feature>
<feature type="mutagenesis site" description="No effect on molecular weight." evidence="4">
    <original>N</original>
    <variation>Q</variation>
    <location>
        <position position="263"/>
    </location>
</feature>
<feature type="sequence conflict" description="In Ref. 1 and 3." evidence="8" ref="1 3">
    <location>
        <position position="14"/>
    </location>
</feature>
<feature type="sequence conflict" description="In Ref. 2; AAB70793." evidence="8" ref="2">
    <original>A</original>
    <variation>P</variation>
    <location>
        <position position="174"/>
    </location>
</feature>
<organism>
    <name type="scientific">Homo sapiens</name>
    <name type="common">Human</name>
    <dbReference type="NCBI Taxonomy" id="9606"/>
    <lineage>
        <taxon>Eukaryota</taxon>
        <taxon>Metazoa</taxon>
        <taxon>Chordata</taxon>
        <taxon>Craniata</taxon>
        <taxon>Vertebrata</taxon>
        <taxon>Euteleostomi</taxon>
        <taxon>Mammalia</taxon>
        <taxon>Eutheria</taxon>
        <taxon>Euarchontoglires</taxon>
        <taxon>Primates</taxon>
        <taxon>Haplorrhini</taxon>
        <taxon>Catarrhini</taxon>
        <taxon>Hominidae</taxon>
        <taxon>Homo</taxon>
    </lineage>
</organism>
<keyword id="KW-0217">Developmental protein</keyword>
<keyword id="KW-0221">Differentiation</keyword>
<keyword id="KW-0903">Direct protein sequencing</keyword>
<keyword id="KW-1015">Disulfide bond</keyword>
<keyword id="KW-0325">Glycoprotein</keyword>
<keyword id="KW-1267">Proteomics identification</keyword>
<keyword id="KW-1185">Reference proteome</keyword>
<keyword id="KW-0964">Secreted</keyword>
<keyword id="KW-0732">Signal</keyword>
<keyword id="KW-0879">Wnt signaling pathway</keyword>
<protein>
    <recommendedName>
        <fullName>Secreted frizzled-related protein 1</fullName>
        <shortName>FRP-1</shortName>
        <shortName>sFRP-1</shortName>
    </recommendedName>
    <alternativeName>
        <fullName>Secreted apoptosis-related protein 2</fullName>
        <shortName>SARP-2</shortName>
    </alternativeName>
</protein>